<protein>
    <recommendedName>
        <fullName evidence="1">Dephospho-CoA kinase</fullName>
        <ecNumber evidence="1">2.7.1.24</ecNumber>
    </recommendedName>
    <alternativeName>
        <fullName evidence="1">Dephosphocoenzyme A kinase</fullName>
    </alternativeName>
</protein>
<accession>Q46I08</accession>
<proteinExistence type="inferred from homology"/>
<evidence type="ECO:0000255" key="1">
    <source>
        <dbReference type="HAMAP-Rule" id="MF_00376"/>
    </source>
</evidence>
<organism>
    <name type="scientific">Prochlorococcus marinus (strain NATL2A)</name>
    <dbReference type="NCBI Taxonomy" id="59920"/>
    <lineage>
        <taxon>Bacteria</taxon>
        <taxon>Bacillati</taxon>
        <taxon>Cyanobacteriota</taxon>
        <taxon>Cyanophyceae</taxon>
        <taxon>Synechococcales</taxon>
        <taxon>Prochlorococcaceae</taxon>
        <taxon>Prochlorococcus</taxon>
    </lineage>
</organism>
<gene>
    <name evidence="1" type="primary">coaE</name>
    <name type="ordered locus">PMN2A_1382</name>
</gene>
<feature type="chain" id="PRO_0000243316" description="Dephospho-CoA kinase">
    <location>
        <begin position="1"/>
        <end position="214"/>
    </location>
</feature>
<feature type="domain" description="DPCK" evidence="1">
    <location>
        <begin position="20"/>
        <end position="214"/>
    </location>
</feature>
<feature type="binding site" evidence="1">
    <location>
        <begin position="28"/>
        <end position="33"/>
    </location>
    <ligand>
        <name>ATP</name>
        <dbReference type="ChEBI" id="CHEBI:30616"/>
    </ligand>
</feature>
<reference key="1">
    <citation type="journal article" date="2007" name="PLoS Genet.">
        <title>Patterns and implications of gene gain and loss in the evolution of Prochlorococcus.</title>
        <authorList>
            <person name="Kettler G.C."/>
            <person name="Martiny A.C."/>
            <person name="Huang K."/>
            <person name="Zucker J."/>
            <person name="Coleman M.L."/>
            <person name="Rodrigue S."/>
            <person name="Chen F."/>
            <person name="Lapidus A."/>
            <person name="Ferriera S."/>
            <person name="Johnson J."/>
            <person name="Steglich C."/>
            <person name="Church G.M."/>
            <person name="Richardson P."/>
            <person name="Chisholm S.W."/>
        </authorList>
    </citation>
    <scope>NUCLEOTIDE SEQUENCE [LARGE SCALE GENOMIC DNA]</scope>
    <source>
        <strain>NATL2A</strain>
    </source>
</reference>
<comment type="function">
    <text evidence="1">Catalyzes the phosphorylation of the 3'-hydroxyl group of dephosphocoenzyme A to form coenzyme A.</text>
</comment>
<comment type="catalytic activity">
    <reaction evidence="1">
        <text>3'-dephospho-CoA + ATP = ADP + CoA + H(+)</text>
        <dbReference type="Rhea" id="RHEA:18245"/>
        <dbReference type="ChEBI" id="CHEBI:15378"/>
        <dbReference type="ChEBI" id="CHEBI:30616"/>
        <dbReference type="ChEBI" id="CHEBI:57287"/>
        <dbReference type="ChEBI" id="CHEBI:57328"/>
        <dbReference type="ChEBI" id="CHEBI:456216"/>
        <dbReference type="EC" id="2.7.1.24"/>
    </reaction>
</comment>
<comment type="pathway">
    <text evidence="1">Cofactor biosynthesis; coenzyme A biosynthesis; CoA from (R)-pantothenate: step 5/5.</text>
</comment>
<comment type="subcellular location">
    <subcellularLocation>
        <location evidence="1">Cytoplasm</location>
    </subcellularLocation>
</comment>
<comment type="similarity">
    <text evidence="1">Belongs to the CoaE family.</text>
</comment>
<name>COAE_PROMT</name>
<keyword id="KW-0067">ATP-binding</keyword>
<keyword id="KW-0173">Coenzyme A biosynthesis</keyword>
<keyword id="KW-0963">Cytoplasm</keyword>
<keyword id="KW-0418">Kinase</keyword>
<keyword id="KW-0547">Nucleotide-binding</keyword>
<keyword id="KW-1185">Reference proteome</keyword>
<keyword id="KW-0808">Transferase</keyword>
<dbReference type="EC" id="2.7.1.24" evidence="1"/>
<dbReference type="EMBL" id="CP000095">
    <property type="protein sequence ID" value="AAZ58870.1"/>
    <property type="molecule type" value="Genomic_DNA"/>
</dbReference>
<dbReference type="RefSeq" id="WP_011294014.1">
    <property type="nucleotide sequence ID" value="NC_007335.2"/>
</dbReference>
<dbReference type="SMR" id="Q46I08"/>
<dbReference type="STRING" id="59920.PMN2A_1382"/>
<dbReference type="KEGG" id="pmn:PMN2A_1382"/>
<dbReference type="HOGENOM" id="CLU_057180_0_0_3"/>
<dbReference type="OrthoDB" id="9812943at2"/>
<dbReference type="PhylomeDB" id="Q46I08"/>
<dbReference type="UniPathway" id="UPA00241">
    <property type="reaction ID" value="UER00356"/>
</dbReference>
<dbReference type="Proteomes" id="UP000002535">
    <property type="component" value="Chromosome"/>
</dbReference>
<dbReference type="GO" id="GO:0005737">
    <property type="term" value="C:cytoplasm"/>
    <property type="evidence" value="ECO:0007669"/>
    <property type="project" value="UniProtKB-SubCell"/>
</dbReference>
<dbReference type="GO" id="GO:0005524">
    <property type="term" value="F:ATP binding"/>
    <property type="evidence" value="ECO:0007669"/>
    <property type="project" value="UniProtKB-UniRule"/>
</dbReference>
<dbReference type="GO" id="GO:0004140">
    <property type="term" value="F:dephospho-CoA kinase activity"/>
    <property type="evidence" value="ECO:0007669"/>
    <property type="project" value="UniProtKB-UniRule"/>
</dbReference>
<dbReference type="GO" id="GO:0015937">
    <property type="term" value="P:coenzyme A biosynthetic process"/>
    <property type="evidence" value="ECO:0007669"/>
    <property type="project" value="UniProtKB-UniRule"/>
</dbReference>
<dbReference type="CDD" id="cd02022">
    <property type="entry name" value="DPCK"/>
    <property type="match status" value="1"/>
</dbReference>
<dbReference type="Gene3D" id="3.40.50.300">
    <property type="entry name" value="P-loop containing nucleotide triphosphate hydrolases"/>
    <property type="match status" value="1"/>
</dbReference>
<dbReference type="HAMAP" id="MF_00376">
    <property type="entry name" value="Dephospho_CoA_kinase"/>
    <property type="match status" value="1"/>
</dbReference>
<dbReference type="InterPro" id="IPR001977">
    <property type="entry name" value="Depp_CoAkinase"/>
</dbReference>
<dbReference type="InterPro" id="IPR027417">
    <property type="entry name" value="P-loop_NTPase"/>
</dbReference>
<dbReference type="NCBIfam" id="TIGR00152">
    <property type="entry name" value="dephospho-CoA kinase"/>
    <property type="match status" value="1"/>
</dbReference>
<dbReference type="PANTHER" id="PTHR10695:SF46">
    <property type="entry name" value="BIFUNCTIONAL COENZYME A SYNTHASE-RELATED"/>
    <property type="match status" value="1"/>
</dbReference>
<dbReference type="PANTHER" id="PTHR10695">
    <property type="entry name" value="DEPHOSPHO-COA KINASE-RELATED"/>
    <property type="match status" value="1"/>
</dbReference>
<dbReference type="Pfam" id="PF01121">
    <property type="entry name" value="CoaE"/>
    <property type="match status" value="1"/>
</dbReference>
<dbReference type="SUPFAM" id="SSF52540">
    <property type="entry name" value="P-loop containing nucleoside triphosphate hydrolases"/>
    <property type="match status" value="1"/>
</dbReference>
<dbReference type="PROSITE" id="PS51219">
    <property type="entry name" value="DPCK"/>
    <property type="match status" value="1"/>
</dbReference>
<sequence length="214" mass="24907">MIDQKQTNNLCLRWKGKQRRIGITGGIASGKTIIGDFLFQAKQWPILDADLYAHEALSAESEIVKKVWLRYGSKIIKNSSKNDQIINRKALAKIVFQNELEKKWLEGIIHPFVNKRIEEELEKSKSNSIVILIIPLLFEKNYTGLCSEICYIDCPRSMQLKRLQSRDNLSIKEANQRIDAQWANSLKKQFADHIINNSNDDETWKLQLKKLYKF</sequence>